<gene>
    <name evidence="1" type="primary">glgC</name>
    <name type="ordered locus">CA_C2237</name>
</gene>
<proteinExistence type="inferred from homology"/>
<comment type="function">
    <text evidence="1">Involved in the biosynthesis of ADP-glucose, a building block required for the elongation reactions to produce glycogen. Catalyzes the reaction between ATP and alpha-D-glucose 1-phosphate (G1P) to produce pyrophosphate and ADP-Glc.</text>
</comment>
<comment type="catalytic activity">
    <reaction evidence="1">
        <text>alpha-D-glucose 1-phosphate + ATP + H(+) = ADP-alpha-D-glucose + diphosphate</text>
        <dbReference type="Rhea" id="RHEA:12120"/>
        <dbReference type="ChEBI" id="CHEBI:15378"/>
        <dbReference type="ChEBI" id="CHEBI:30616"/>
        <dbReference type="ChEBI" id="CHEBI:33019"/>
        <dbReference type="ChEBI" id="CHEBI:57498"/>
        <dbReference type="ChEBI" id="CHEBI:58601"/>
        <dbReference type="EC" id="2.7.7.27"/>
    </reaction>
</comment>
<comment type="pathway">
    <text evidence="1">Glycan biosynthesis; glycogen biosynthesis.</text>
</comment>
<comment type="subunit">
    <text evidence="1">Homotetramer.</text>
</comment>
<comment type="similarity">
    <text evidence="1">Belongs to the bacterial/plant glucose-1-phosphate adenylyltransferase family.</text>
</comment>
<protein>
    <recommendedName>
        <fullName evidence="1">Glucose-1-phosphate adenylyltransferase</fullName>
        <ecNumber evidence="1">2.7.7.27</ecNumber>
    </recommendedName>
    <alternativeName>
        <fullName evidence="1">ADP-glucose pyrophosphorylase</fullName>
        <shortName evidence="1">ADPGlc PPase</shortName>
    </alternativeName>
    <alternativeName>
        <fullName evidence="1">ADP-glucose synthase</fullName>
    </alternativeName>
</protein>
<name>GLGC_CLOAB</name>
<evidence type="ECO:0000255" key="1">
    <source>
        <dbReference type="HAMAP-Rule" id="MF_00624"/>
    </source>
</evidence>
<accession>Q97GX8</accession>
<keyword id="KW-0067">ATP-binding</keyword>
<keyword id="KW-0119">Carbohydrate metabolism</keyword>
<keyword id="KW-0320">Glycogen biosynthesis</keyword>
<keyword id="KW-0321">Glycogen metabolism</keyword>
<keyword id="KW-0547">Nucleotide-binding</keyword>
<keyword id="KW-0548">Nucleotidyltransferase</keyword>
<keyword id="KW-1185">Reference proteome</keyword>
<keyword id="KW-0808">Transferase</keyword>
<sequence>MSKKEIIAMILAGGQGSRLGILTRRTAKPAVPFGGKYRIIDFTLSNCSNSGIDTVGVLTQYKPLALNSHIGIGSPWDLDRTSGGVSVLPPYMKETGGNWYKGTANAIYQNRHFIENYDPEYVVILSGDHIYKMNYLEMLDFHKKKNADATIAVFEVPLNEASRFGIMNTDEDDRINEFEEKPKKPKNNLASMGIYIFNWRFLKRFLEEDARDESSNNDFGKNIIPNMLNKKRKLYAYRFNGYWKDVGTIQSLWEANMDLLDDNNSLNIYDPKWKIYSVNPTMPPQYIACNSDVKRSLVVEGCIVLGKVYNSVLFPGVYIGRDTIITNSVIMPNVIVGNNVIIKKSIIGSNARVDDNVIVGTNDNISVVGAGSKVKESIIQ</sequence>
<dbReference type="EC" id="2.7.7.27" evidence="1"/>
<dbReference type="EMBL" id="AE001437">
    <property type="protein sequence ID" value="AAK80194.1"/>
    <property type="molecule type" value="Genomic_DNA"/>
</dbReference>
<dbReference type="PIR" id="G97175">
    <property type="entry name" value="G97175"/>
</dbReference>
<dbReference type="RefSeq" id="NP_348854.1">
    <property type="nucleotide sequence ID" value="NC_003030.1"/>
</dbReference>
<dbReference type="RefSeq" id="WP_010965535.1">
    <property type="nucleotide sequence ID" value="NC_003030.1"/>
</dbReference>
<dbReference type="SMR" id="Q97GX8"/>
<dbReference type="STRING" id="272562.CA_C2237"/>
<dbReference type="KEGG" id="cac:CA_C2237"/>
<dbReference type="PATRIC" id="fig|272562.8.peg.2438"/>
<dbReference type="eggNOG" id="COG0448">
    <property type="taxonomic scope" value="Bacteria"/>
</dbReference>
<dbReference type="HOGENOM" id="CLU_029499_14_0_9"/>
<dbReference type="OrthoDB" id="9801810at2"/>
<dbReference type="UniPathway" id="UPA00164"/>
<dbReference type="Proteomes" id="UP000000814">
    <property type="component" value="Chromosome"/>
</dbReference>
<dbReference type="GO" id="GO:0005524">
    <property type="term" value="F:ATP binding"/>
    <property type="evidence" value="ECO:0007669"/>
    <property type="project" value="UniProtKB-KW"/>
</dbReference>
<dbReference type="GO" id="GO:0008878">
    <property type="term" value="F:glucose-1-phosphate adenylyltransferase activity"/>
    <property type="evidence" value="ECO:0007669"/>
    <property type="project" value="UniProtKB-UniRule"/>
</dbReference>
<dbReference type="GO" id="GO:0005978">
    <property type="term" value="P:glycogen biosynthetic process"/>
    <property type="evidence" value="ECO:0007669"/>
    <property type="project" value="UniProtKB-UniRule"/>
</dbReference>
<dbReference type="CDD" id="cd02508">
    <property type="entry name" value="ADP_Glucose_PP"/>
    <property type="match status" value="1"/>
</dbReference>
<dbReference type="CDD" id="cd04651">
    <property type="entry name" value="LbH_G1P_AT_C"/>
    <property type="match status" value="1"/>
</dbReference>
<dbReference type="Gene3D" id="2.160.10.10">
    <property type="entry name" value="Hexapeptide repeat proteins"/>
    <property type="match status" value="1"/>
</dbReference>
<dbReference type="Gene3D" id="3.90.550.10">
    <property type="entry name" value="Spore Coat Polysaccharide Biosynthesis Protein SpsA, Chain A"/>
    <property type="match status" value="1"/>
</dbReference>
<dbReference type="HAMAP" id="MF_00624">
    <property type="entry name" value="GlgC"/>
    <property type="match status" value="1"/>
</dbReference>
<dbReference type="InterPro" id="IPR011831">
    <property type="entry name" value="ADP-Glc_PPase"/>
</dbReference>
<dbReference type="InterPro" id="IPR005836">
    <property type="entry name" value="ADP_Glu_pyroP_CS"/>
</dbReference>
<dbReference type="InterPro" id="IPR023049">
    <property type="entry name" value="GlgC_bac"/>
</dbReference>
<dbReference type="InterPro" id="IPR056818">
    <property type="entry name" value="GlmU/GlgC-like_hexapep"/>
</dbReference>
<dbReference type="InterPro" id="IPR005835">
    <property type="entry name" value="NTP_transferase_dom"/>
</dbReference>
<dbReference type="InterPro" id="IPR029044">
    <property type="entry name" value="Nucleotide-diphossugar_trans"/>
</dbReference>
<dbReference type="InterPro" id="IPR011004">
    <property type="entry name" value="Trimer_LpxA-like_sf"/>
</dbReference>
<dbReference type="NCBIfam" id="TIGR02091">
    <property type="entry name" value="glgC"/>
    <property type="match status" value="1"/>
</dbReference>
<dbReference type="NCBIfam" id="NF003670">
    <property type="entry name" value="PRK05293.1"/>
    <property type="match status" value="1"/>
</dbReference>
<dbReference type="PANTHER" id="PTHR43523:SF2">
    <property type="entry name" value="GLUCOSE-1-PHOSPHATE ADENYLYLTRANSFERASE"/>
    <property type="match status" value="1"/>
</dbReference>
<dbReference type="PANTHER" id="PTHR43523">
    <property type="entry name" value="GLUCOSE-1-PHOSPHATE ADENYLYLTRANSFERASE-RELATED"/>
    <property type="match status" value="1"/>
</dbReference>
<dbReference type="Pfam" id="PF24894">
    <property type="entry name" value="Hexapep_GlmU"/>
    <property type="match status" value="1"/>
</dbReference>
<dbReference type="Pfam" id="PF00483">
    <property type="entry name" value="NTP_transferase"/>
    <property type="match status" value="1"/>
</dbReference>
<dbReference type="SUPFAM" id="SSF53448">
    <property type="entry name" value="Nucleotide-diphospho-sugar transferases"/>
    <property type="match status" value="1"/>
</dbReference>
<dbReference type="SUPFAM" id="SSF51161">
    <property type="entry name" value="Trimeric LpxA-like enzymes"/>
    <property type="match status" value="1"/>
</dbReference>
<dbReference type="PROSITE" id="PS00808">
    <property type="entry name" value="ADP_GLC_PYROPHOSPH_1"/>
    <property type="match status" value="1"/>
</dbReference>
<dbReference type="PROSITE" id="PS00809">
    <property type="entry name" value="ADP_GLC_PYROPHOSPH_2"/>
    <property type="match status" value="1"/>
</dbReference>
<dbReference type="PROSITE" id="PS00810">
    <property type="entry name" value="ADP_GLC_PYROPHOSPH_3"/>
    <property type="match status" value="1"/>
</dbReference>
<feature type="chain" id="PRO_0000195287" description="Glucose-1-phosphate adenylyltransferase">
    <location>
        <begin position="1"/>
        <end position="380"/>
    </location>
</feature>
<feature type="binding site" evidence="1">
    <location>
        <position position="100"/>
    </location>
    <ligand>
        <name>alpha-D-glucose 1-phosphate</name>
        <dbReference type="ChEBI" id="CHEBI:58601"/>
    </ligand>
</feature>
<feature type="binding site" evidence="1">
    <location>
        <position position="165"/>
    </location>
    <ligand>
        <name>alpha-D-glucose 1-phosphate</name>
        <dbReference type="ChEBI" id="CHEBI:58601"/>
    </ligand>
</feature>
<feature type="binding site" evidence="1">
    <location>
        <begin position="180"/>
        <end position="181"/>
    </location>
    <ligand>
        <name>alpha-D-glucose 1-phosphate</name>
        <dbReference type="ChEBI" id="CHEBI:58601"/>
    </ligand>
</feature>
<feature type="binding site" evidence="1">
    <location>
        <position position="191"/>
    </location>
    <ligand>
        <name>alpha-D-glucose 1-phosphate</name>
        <dbReference type="ChEBI" id="CHEBI:58601"/>
    </ligand>
</feature>
<organism>
    <name type="scientific">Clostridium acetobutylicum (strain ATCC 824 / DSM 792 / JCM 1419 / IAM 19013 / LMG 5710 / NBRC 13948 / NRRL B-527 / VKM B-1787 / 2291 / W)</name>
    <dbReference type="NCBI Taxonomy" id="272562"/>
    <lineage>
        <taxon>Bacteria</taxon>
        <taxon>Bacillati</taxon>
        <taxon>Bacillota</taxon>
        <taxon>Clostridia</taxon>
        <taxon>Eubacteriales</taxon>
        <taxon>Clostridiaceae</taxon>
        <taxon>Clostridium</taxon>
    </lineage>
</organism>
<reference key="1">
    <citation type="journal article" date="2001" name="J. Bacteriol.">
        <title>Genome sequence and comparative analysis of the solvent-producing bacterium Clostridium acetobutylicum.</title>
        <authorList>
            <person name="Noelling J."/>
            <person name="Breton G."/>
            <person name="Omelchenko M.V."/>
            <person name="Makarova K.S."/>
            <person name="Zeng Q."/>
            <person name="Gibson R."/>
            <person name="Lee H.M."/>
            <person name="Dubois J."/>
            <person name="Qiu D."/>
            <person name="Hitti J."/>
            <person name="Wolf Y.I."/>
            <person name="Tatusov R.L."/>
            <person name="Sabathe F."/>
            <person name="Doucette-Stamm L.A."/>
            <person name="Soucaille P."/>
            <person name="Daly M.J."/>
            <person name="Bennett G.N."/>
            <person name="Koonin E.V."/>
            <person name="Smith D.R."/>
        </authorList>
    </citation>
    <scope>NUCLEOTIDE SEQUENCE [LARGE SCALE GENOMIC DNA]</scope>
    <source>
        <strain>ATCC 824 / DSM 792 / JCM 1419 / IAM 19013 / LMG 5710 / NBRC 13948 / NRRL B-527 / VKM B-1787 / 2291 / W</strain>
    </source>
</reference>